<feature type="chain" id="PRO_1000018463" description="Indole-3-glycerol phosphate synthase">
    <location>
        <begin position="1"/>
        <end position="261"/>
    </location>
</feature>
<name>TRPC_BURTA</name>
<evidence type="ECO:0000255" key="1">
    <source>
        <dbReference type="HAMAP-Rule" id="MF_00134"/>
    </source>
</evidence>
<sequence length="261" mass="28281">MSDILDKIIAVKREEIAAALKSAPLEELKLQASARDSRDFVGALRGKHAAGHAAVIAEVKKASPSKGVLRERFVPADIARSYAEHGAACLSVLTDEQFFQGSARYLEEARAACNLPVLRKDFIVDPYQVLEARAMGADAILLIAAALDTPLMVDLEAYAHSLGLAVLVEVHNRDELSAALELKTPLVGINNRNLRTFETTIDTTLGMLDAIPDDRIVVTESGILSRADVERMEAAGVHTFLVGEAFMRAENPGAELARMFF</sequence>
<protein>
    <recommendedName>
        <fullName evidence="1">Indole-3-glycerol phosphate synthase</fullName>
        <shortName evidence="1">IGPS</shortName>
        <ecNumber evidence="1">4.1.1.48</ecNumber>
    </recommendedName>
</protein>
<comment type="catalytic activity">
    <reaction evidence="1">
        <text>1-(2-carboxyphenylamino)-1-deoxy-D-ribulose 5-phosphate + H(+) = (1S,2R)-1-C-(indol-3-yl)glycerol 3-phosphate + CO2 + H2O</text>
        <dbReference type="Rhea" id="RHEA:23476"/>
        <dbReference type="ChEBI" id="CHEBI:15377"/>
        <dbReference type="ChEBI" id="CHEBI:15378"/>
        <dbReference type="ChEBI" id="CHEBI:16526"/>
        <dbReference type="ChEBI" id="CHEBI:58613"/>
        <dbReference type="ChEBI" id="CHEBI:58866"/>
        <dbReference type="EC" id="4.1.1.48"/>
    </reaction>
</comment>
<comment type="pathway">
    <text evidence="1">Amino-acid biosynthesis; L-tryptophan biosynthesis; L-tryptophan from chorismate: step 4/5.</text>
</comment>
<comment type="similarity">
    <text evidence="1">Belongs to the TrpC family.</text>
</comment>
<organism>
    <name type="scientific">Burkholderia thailandensis (strain ATCC 700388 / DSM 13276 / CCUG 48851 / CIP 106301 / E264)</name>
    <dbReference type="NCBI Taxonomy" id="271848"/>
    <lineage>
        <taxon>Bacteria</taxon>
        <taxon>Pseudomonadati</taxon>
        <taxon>Pseudomonadota</taxon>
        <taxon>Betaproteobacteria</taxon>
        <taxon>Burkholderiales</taxon>
        <taxon>Burkholderiaceae</taxon>
        <taxon>Burkholderia</taxon>
        <taxon>pseudomallei group</taxon>
    </lineage>
</organism>
<gene>
    <name evidence="1" type="primary">trpC</name>
    <name type="ordered locus">BTH_I2912</name>
</gene>
<keyword id="KW-0028">Amino-acid biosynthesis</keyword>
<keyword id="KW-0057">Aromatic amino acid biosynthesis</keyword>
<keyword id="KW-0210">Decarboxylase</keyword>
<keyword id="KW-0456">Lyase</keyword>
<keyword id="KW-0822">Tryptophan biosynthesis</keyword>
<dbReference type="EC" id="4.1.1.48" evidence="1"/>
<dbReference type="EMBL" id="CP000086">
    <property type="protein sequence ID" value="ABC37677.1"/>
    <property type="molecule type" value="Genomic_DNA"/>
</dbReference>
<dbReference type="RefSeq" id="WP_009888705.1">
    <property type="nucleotide sequence ID" value="NZ_CP008786.1"/>
</dbReference>
<dbReference type="SMR" id="Q2SUI0"/>
<dbReference type="GeneID" id="45122602"/>
<dbReference type="KEGG" id="bte:BTH_I2912"/>
<dbReference type="HOGENOM" id="CLU_034247_2_0_4"/>
<dbReference type="UniPathway" id="UPA00035">
    <property type="reaction ID" value="UER00043"/>
</dbReference>
<dbReference type="Proteomes" id="UP000001930">
    <property type="component" value="Chromosome I"/>
</dbReference>
<dbReference type="GO" id="GO:0004425">
    <property type="term" value="F:indole-3-glycerol-phosphate synthase activity"/>
    <property type="evidence" value="ECO:0007669"/>
    <property type="project" value="UniProtKB-UniRule"/>
</dbReference>
<dbReference type="GO" id="GO:0004640">
    <property type="term" value="F:phosphoribosylanthranilate isomerase activity"/>
    <property type="evidence" value="ECO:0007669"/>
    <property type="project" value="TreeGrafter"/>
</dbReference>
<dbReference type="GO" id="GO:0000162">
    <property type="term" value="P:L-tryptophan biosynthetic process"/>
    <property type="evidence" value="ECO:0007669"/>
    <property type="project" value="UniProtKB-UniRule"/>
</dbReference>
<dbReference type="CDD" id="cd00331">
    <property type="entry name" value="IGPS"/>
    <property type="match status" value="1"/>
</dbReference>
<dbReference type="FunFam" id="3.20.20.70:FF:000024">
    <property type="entry name" value="Indole-3-glycerol phosphate synthase"/>
    <property type="match status" value="1"/>
</dbReference>
<dbReference type="Gene3D" id="3.20.20.70">
    <property type="entry name" value="Aldolase class I"/>
    <property type="match status" value="1"/>
</dbReference>
<dbReference type="HAMAP" id="MF_00134_B">
    <property type="entry name" value="IGPS_B"/>
    <property type="match status" value="1"/>
</dbReference>
<dbReference type="InterPro" id="IPR013785">
    <property type="entry name" value="Aldolase_TIM"/>
</dbReference>
<dbReference type="InterPro" id="IPR045186">
    <property type="entry name" value="Indole-3-glycerol_P_synth"/>
</dbReference>
<dbReference type="InterPro" id="IPR013798">
    <property type="entry name" value="Indole-3-glycerol_P_synth_dom"/>
</dbReference>
<dbReference type="InterPro" id="IPR001468">
    <property type="entry name" value="Indole-3-GlycerolPSynthase_CS"/>
</dbReference>
<dbReference type="InterPro" id="IPR011060">
    <property type="entry name" value="RibuloseP-bd_barrel"/>
</dbReference>
<dbReference type="NCBIfam" id="NF001373">
    <property type="entry name" value="PRK00278.1-6"/>
    <property type="match status" value="1"/>
</dbReference>
<dbReference type="NCBIfam" id="NF001377">
    <property type="entry name" value="PRK00278.2-4"/>
    <property type="match status" value="1"/>
</dbReference>
<dbReference type="PANTHER" id="PTHR22854:SF2">
    <property type="entry name" value="INDOLE-3-GLYCEROL-PHOSPHATE SYNTHASE"/>
    <property type="match status" value="1"/>
</dbReference>
<dbReference type="PANTHER" id="PTHR22854">
    <property type="entry name" value="TRYPTOPHAN BIOSYNTHESIS PROTEIN"/>
    <property type="match status" value="1"/>
</dbReference>
<dbReference type="Pfam" id="PF00218">
    <property type="entry name" value="IGPS"/>
    <property type="match status" value="1"/>
</dbReference>
<dbReference type="SUPFAM" id="SSF51366">
    <property type="entry name" value="Ribulose-phoshate binding barrel"/>
    <property type="match status" value="1"/>
</dbReference>
<dbReference type="PROSITE" id="PS00614">
    <property type="entry name" value="IGPS"/>
    <property type="match status" value="1"/>
</dbReference>
<reference key="1">
    <citation type="journal article" date="2005" name="BMC Genomics">
        <title>Bacterial genome adaptation to niches: divergence of the potential virulence genes in three Burkholderia species of different survival strategies.</title>
        <authorList>
            <person name="Kim H.S."/>
            <person name="Schell M.A."/>
            <person name="Yu Y."/>
            <person name="Ulrich R.L."/>
            <person name="Sarria S.H."/>
            <person name="Nierman W.C."/>
            <person name="DeShazer D."/>
        </authorList>
    </citation>
    <scope>NUCLEOTIDE SEQUENCE [LARGE SCALE GENOMIC DNA]</scope>
    <source>
        <strain>ATCC 700388 / DSM 13276 / CCUG 48851 / CIP 106301 / E264</strain>
    </source>
</reference>
<accession>Q2SUI0</accession>
<proteinExistence type="inferred from homology"/>